<accession>P0ADU8</accession>
<accession>P36652</accession>
<organism>
    <name type="scientific">Escherichia coli O6:H1 (strain CFT073 / ATCC 700928 / UPEC)</name>
    <dbReference type="NCBI Taxonomy" id="199310"/>
    <lineage>
        <taxon>Bacteria</taxon>
        <taxon>Pseudomonadati</taxon>
        <taxon>Pseudomonadota</taxon>
        <taxon>Gammaproteobacteria</taxon>
        <taxon>Enterobacterales</taxon>
        <taxon>Enterobacteriaceae</taxon>
        <taxon>Escherichia</taxon>
    </lineage>
</organism>
<proteinExistence type="predicted"/>
<feature type="chain" id="PRO_0000169415" description="Uncharacterized protein YqiB">
    <location>
        <begin position="1"/>
        <end position="140"/>
    </location>
</feature>
<sequence length="140" mass="16548">MKRYTPDFPEMMRLCEMNFSQLRRLLPRNDAPGETVSYQVANAQYRLTIVESTRYTTLVTIEQTAPAISYWSLPSMTVRLYHDAMVAEVCSSQQIFRFKARYDYPNKKLHQRDEKHQINQFLADWLRYCLAHGAMAIPVY</sequence>
<name>YQIB_ECOL6</name>
<protein>
    <recommendedName>
        <fullName>Uncharacterized protein YqiB</fullName>
    </recommendedName>
</protein>
<keyword id="KW-1185">Reference proteome</keyword>
<gene>
    <name type="primary">yqiB</name>
    <name type="ordered locus">c3779</name>
</gene>
<reference key="1">
    <citation type="journal article" date="2002" name="Proc. Natl. Acad. Sci. U.S.A.">
        <title>Extensive mosaic structure revealed by the complete genome sequence of uropathogenic Escherichia coli.</title>
        <authorList>
            <person name="Welch R.A."/>
            <person name="Burland V."/>
            <person name="Plunkett G. III"/>
            <person name="Redford P."/>
            <person name="Roesch P."/>
            <person name="Rasko D."/>
            <person name="Buckles E.L."/>
            <person name="Liou S.-R."/>
            <person name="Boutin A."/>
            <person name="Hackett J."/>
            <person name="Stroud D."/>
            <person name="Mayhew G.F."/>
            <person name="Rose D.J."/>
            <person name="Zhou S."/>
            <person name="Schwartz D.C."/>
            <person name="Perna N.T."/>
            <person name="Mobley H.L.T."/>
            <person name="Donnenberg M.S."/>
            <person name="Blattner F.R."/>
        </authorList>
    </citation>
    <scope>NUCLEOTIDE SEQUENCE [LARGE SCALE GENOMIC DNA]</scope>
    <source>
        <strain>CFT073 / ATCC 700928 / UPEC</strain>
    </source>
</reference>
<dbReference type="EMBL" id="AE014075">
    <property type="protein sequence ID" value="AAN82223.1"/>
    <property type="molecule type" value="Genomic_DNA"/>
</dbReference>
<dbReference type="RefSeq" id="WP_000833393.1">
    <property type="nucleotide sequence ID" value="NZ_CP051263.1"/>
</dbReference>
<dbReference type="STRING" id="199310.c3779"/>
<dbReference type="KEGG" id="ecc:c3779"/>
<dbReference type="eggNOG" id="COG3151">
    <property type="taxonomic scope" value="Bacteria"/>
</dbReference>
<dbReference type="HOGENOM" id="CLU_116657_1_1_6"/>
<dbReference type="BioCyc" id="ECOL199310:C3779-MONOMER"/>
<dbReference type="Proteomes" id="UP000001410">
    <property type="component" value="Chromosome"/>
</dbReference>
<dbReference type="InterPro" id="IPR009659">
    <property type="entry name" value="DUF1249"/>
</dbReference>
<dbReference type="NCBIfam" id="NF008267">
    <property type="entry name" value="PRK11039.1"/>
    <property type="match status" value="1"/>
</dbReference>
<dbReference type="PANTHER" id="PTHR38774:SF1">
    <property type="entry name" value="CYTOPLASMIC PROTEIN"/>
    <property type="match status" value="1"/>
</dbReference>
<dbReference type="PANTHER" id="PTHR38774">
    <property type="entry name" value="CYTOPLASMIC PROTEIN-RELATED"/>
    <property type="match status" value="1"/>
</dbReference>
<dbReference type="Pfam" id="PF06853">
    <property type="entry name" value="DUF1249"/>
    <property type="match status" value="1"/>
</dbReference>